<name>NREB_ARCFU</name>
<evidence type="ECO:0000255" key="1">
    <source>
        <dbReference type="HAMAP-Rule" id="MF_02096"/>
    </source>
</evidence>
<evidence type="ECO:0000303" key="2">
    <source>
    </source>
</evidence>
<evidence type="ECO:0000305" key="3"/>
<evidence type="ECO:0000305" key="4">
    <source>
    </source>
</evidence>
<evidence type="ECO:0000312" key="5">
    <source>
        <dbReference type="EMBL" id="AAB89664.1"/>
    </source>
</evidence>
<organism>
    <name type="scientific">Archaeoglobus fulgidus (strain ATCC 49558 / DSM 4304 / JCM 9628 / NBRC 100126 / VC-16)</name>
    <dbReference type="NCBI Taxonomy" id="224325"/>
    <lineage>
        <taxon>Archaea</taxon>
        <taxon>Methanobacteriati</taxon>
        <taxon>Methanobacteriota</taxon>
        <taxon>Archaeoglobi</taxon>
        <taxon>Archaeoglobales</taxon>
        <taxon>Archaeoglobaceae</taxon>
        <taxon>Archaeoglobus</taxon>
    </lineage>
</organism>
<sequence>MDCIECRGRMLCSRKVCPLMPSLRPQVSVERDILGSSPPSVFVGRYGYPKVRICPAVPPFTGDTKIYDTPEMWREVPVERVLEFRYSMILGQFRADVRRSKEVEVVQEMSLYDKPIDVEVSFAKPPSVRAFFDDVLPPFGASAPAKEVIIHSAPRPPKAVEKVYYDTDLRAVEAMSYLYERGVAVSHIQKLLSAGTLGVKRKLVPTRWAITAVDDTLSKQIIEEIKQYETIDRYRVFVLKESKNLFVAILCPSPWSYEWGEAWYPDTTWNRTRKVGVLTDSEGFFGRTTYARLGGCYYSSRLATAEYLRRIRRQATAIVWREIYPGFNVPIGVWFVREMLRKMYAGKYCEFDTLEDALRFVDKHSNLDVGRWIEKSTLVKRGRQRTLWEFM</sequence>
<protein>
    <recommendedName>
        <fullName evidence="3">DNA repair protein NreB</fullName>
    </recommendedName>
</protein>
<comment type="function">
    <text evidence="1">Involved in DNA damage repair.</text>
</comment>
<comment type="subunit">
    <text evidence="1">Interacts with the DNA polymerase sliding clamp (PCNA) via the PIP (PCNA-interacting peptide) motif.</text>
</comment>
<comment type="domain">
    <text evidence="1 4">Contains a predicted C4 metal binding domain at the N-terminus, which could be a zinc finger DNA binding domain.</text>
</comment>
<comment type="similarity">
    <text evidence="1 4">Belongs to the Nre family.</text>
</comment>
<gene>
    <name evidence="2" type="primary">nreB</name>
    <name evidence="5" type="ordered locus">AF_1590</name>
</gene>
<accession>O28682</accession>
<keyword id="KW-0227">DNA damage</keyword>
<keyword id="KW-0234">DNA repair</keyword>
<keyword id="KW-0479">Metal-binding</keyword>
<keyword id="KW-1185">Reference proteome</keyword>
<keyword id="KW-0862">Zinc</keyword>
<keyword id="KW-0863">Zinc-finger</keyword>
<reference key="1">
    <citation type="journal article" date="1997" name="Nature">
        <title>The complete genome sequence of the hyperthermophilic, sulphate-reducing archaeon Archaeoglobus fulgidus.</title>
        <authorList>
            <person name="Klenk H.-P."/>
            <person name="Clayton R.A."/>
            <person name="Tomb J.-F."/>
            <person name="White O."/>
            <person name="Nelson K.E."/>
            <person name="Ketchum K.A."/>
            <person name="Dodson R.J."/>
            <person name="Gwinn M.L."/>
            <person name="Hickey E.K."/>
            <person name="Peterson J.D."/>
            <person name="Richardson D.L."/>
            <person name="Kerlavage A.R."/>
            <person name="Graham D.E."/>
            <person name="Kyrpides N.C."/>
            <person name="Fleischmann R.D."/>
            <person name="Quackenbush J."/>
            <person name="Lee N.H."/>
            <person name="Sutton G.G."/>
            <person name="Gill S.R."/>
            <person name="Kirkness E.F."/>
            <person name="Dougherty B.A."/>
            <person name="McKenney K."/>
            <person name="Adams M.D."/>
            <person name="Loftus B.J."/>
            <person name="Peterson S.N."/>
            <person name="Reich C.I."/>
            <person name="McNeil L.K."/>
            <person name="Badger J.H."/>
            <person name="Glodek A."/>
            <person name="Zhou L."/>
            <person name="Overbeek R."/>
            <person name="Gocayne J.D."/>
            <person name="Weidman J.F."/>
            <person name="McDonald L.A."/>
            <person name="Utterback T.R."/>
            <person name="Cotton M.D."/>
            <person name="Spriggs T."/>
            <person name="Artiach P."/>
            <person name="Kaine B.P."/>
            <person name="Sykes S.M."/>
            <person name="Sadow P.W."/>
            <person name="D'Andrea K.P."/>
            <person name="Bowman C."/>
            <person name="Fujii C."/>
            <person name="Garland S.A."/>
            <person name="Mason T.M."/>
            <person name="Olsen G.J."/>
            <person name="Fraser C.M."/>
            <person name="Smith H.O."/>
            <person name="Woese C.R."/>
            <person name="Venter J.C."/>
        </authorList>
    </citation>
    <scope>NUCLEOTIDE SEQUENCE [LARGE SCALE GENOMIC DNA]</scope>
    <source>
        <strain>ATCC 49558 / DSM 4304 / JCM 9628 / NBRC 100126 / VC-16</strain>
    </source>
</reference>
<reference key="2">
    <citation type="journal article" date="2016" name="Mol. Microbiol.">
        <title>A novel archaeal DNA repair factor that acts with the UvrABC system to repair mitomycin C-induced DNA damage in a PCNA-dependent manner.</title>
        <authorList>
            <person name="Giroux X."/>
            <person name="MacNeill S.A."/>
        </authorList>
    </citation>
    <scope>NOMENCLATURE</scope>
    <scope>PIP MOTIF</scope>
    <scope>POTENTIAL METAL-BINDING SITE</scope>
    <source>
        <strain>ATCC 49558 / DSM 4304 / JCM 9628 / NBRC 100126 / VC-16</strain>
    </source>
</reference>
<dbReference type="EMBL" id="AE000782">
    <property type="protein sequence ID" value="AAB89664.1"/>
    <property type="molecule type" value="Genomic_DNA"/>
</dbReference>
<dbReference type="PIR" id="E69448">
    <property type="entry name" value="E69448"/>
</dbReference>
<dbReference type="RefSeq" id="WP_010879087.1">
    <property type="nucleotide sequence ID" value="NC_000917.1"/>
</dbReference>
<dbReference type="STRING" id="224325.AF_1590"/>
<dbReference type="PaxDb" id="224325-AF_1590"/>
<dbReference type="EnsemblBacteria" id="AAB89664">
    <property type="protein sequence ID" value="AAB89664"/>
    <property type="gene ID" value="AF_1590"/>
</dbReference>
<dbReference type="GeneID" id="1484818"/>
<dbReference type="KEGG" id="afu:AF_1590"/>
<dbReference type="eggNOG" id="arCOG04269">
    <property type="taxonomic scope" value="Archaea"/>
</dbReference>
<dbReference type="HOGENOM" id="CLU_039703_0_0_2"/>
<dbReference type="PhylomeDB" id="O28682"/>
<dbReference type="Proteomes" id="UP000002199">
    <property type="component" value="Chromosome"/>
</dbReference>
<dbReference type="GO" id="GO:0008270">
    <property type="term" value="F:zinc ion binding"/>
    <property type="evidence" value="ECO:0007669"/>
    <property type="project" value="UniProtKB-UniRule"/>
</dbReference>
<dbReference type="GO" id="GO:0006281">
    <property type="term" value="P:DNA repair"/>
    <property type="evidence" value="ECO:0007669"/>
    <property type="project" value="UniProtKB-UniRule"/>
</dbReference>
<dbReference type="HAMAP" id="MF_02096">
    <property type="entry name" value="Nre"/>
    <property type="match status" value="1"/>
</dbReference>
<dbReference type="InterPro" id="IPR033167">
    <property type="entry name" value="Nre"/>
</dbReference>
<dbReference type="InterPro" id="IPR006979">
    <property type="entry name" value="Nre_C"/>
</dbReference>
<dbReference type="InterPro" id="IPR006978">
    <property type="entry name" value="Nre_N"/>
</dbReference>
<dbReference type="PANTHER" id="PTHR38136">
    <property type="entry name" value="DNA REPAIR PROTEIN"/>
    <property type="match status" value="1"/>
</dbReference>
<dbReference type="PANTHER" id="PTHR38136:SF2">
    <property type="entry name" value="DNA REPAIR PROTEIN"/>
    <property type="match status" value="1"/>
</dbReference>
<dbReference type="Pfam" id="PF04895">
    <property type="entry name" value="Nre_C"/>
    <property type="match status" value="1"/>
</dbReference>
<dbReference type="Pfam" id="PF04894">
    <property type="entry name" value="Nre_N"/>
    <property type="match status" value="1"/>
</dbReference>
<feature type="chain" id="PRO_0000442520" description="DNA repair protein NreB">
    <location>
        <begin position="1"/>
        <end position="391"/>
    </location>
</feature>
<feature type="zinc finger region" description="C4-type" evidence="1 4">
    <location>
        <begin position="3"/>
        <end position="17"/>
    </location>
</feature>
<feature type="short sequence motif" description="PIP motif" evidence="1 4">
    <location>
        <begin position="384"/>
        <end position="391"/>
    </location>
</feature>
<proteinExistence type="evidence at protein level"/>